<keyword id="KW-1185">Reference proteome</keyword>
<feature type="chain" id="PRO_0000210690" description="Uncharacterized protein MPN_505">
    <location>
        <begin position="1"/>
        <end position="253"/>
    </location>
</feature>
<comment type="similarity">
    <text evidence="1">Belongs to the MG439/MG440 family.</text>
</comment>
<organism>
    <name type="scientific">Mycoplasma pneumoniae (strain ATCC 29342 / M129 / Subtype 1)</name>
    <name type="common">Mycoplasmoides pneumoniae</name>
    <dbReference type="NCBI Taxonomy" id="272634"/>
    <lineage>
        <taxon>Bacteria</taxon>
        <taxon>Bacillati</taxon>
        <taxon>Mycoplasmatota</taxon>
        <taxon>Mycoplasmoidales</taxon>
        <taxon>Mycoplasmoidaceae</taxon>
        <taxon>Mycoplasmoides</taxon>
    </lineage>
</organism>
<evidence type="ECO:0000305" key="1"/>
<gene>
    <name type="ordered locus">MPN_505</name>
    <name type="ORF">MP337</name>
    <name type="ORF">P02_orf253</name>
</gene>
<proteinExistence type="inferred from homology"/>
<protein>
    <recommendedName>
        <fullName>Uncharacterized protein MPN_505</fullName>
    </recommendedName>
</protein>
<reference key="1">
    <citation type="journal article" date="1996" name="Nucleic Acids Res.">
        <title>Complete sequence analysis of the genome of the bacterium Mycoplasma pneumoniae.</title>
        <authorList>
            <person name="Himmelreich R."/>
            <person name="Hilbert H."/>
            <person name="Plagens H."/>
            <person name="Pirkl E."/>
            <person name="Li B.-C."/>
            <person name="Herrmann R."/>
        </authorList>
    </citation>
    <scope>NUCLEOTIDE SEQUENCE [LARGE SCALE GENOMIC DNA]</scope>
    <source>
        <strain>ATCC 29342 / M129 / Subtype 1</strain>
    </source>
</reference>
<name>Y505_MYCPN</name>
<sequence>MRKKRLLSRISFSSLFLLCGTVLSAYTGIQADLRNLIKETTKKDIDVYKAIKTTEGKKNIITSLKKSYEVNPKDTTKLLLDAWKQSFEKGELGIPDLDFEDVIYPKTSEPFKFERKVDHFQMTYQSFKDLSIEAKLSYNFNWFGDYSLGGFTAKKGDKHYFDLFLKIKSNSDPKKQFTTEKFLTKEEKNKVNGKEITRNLEWIEFSASLSWLIKGKDDVSQKSVKQFLSSYANNTSGYSRDINLFIYLEYLIK</sequence>
<dbReference type="EMBL" id="U00089">
    <property type="protein sequence ID" value="AAB95985.1"/>
    <property type="molecule type" value="Genomic_DNA"/>
</dbReference>
<dbReference type="PIR" id="S73663">
    <property type="entry name" value="S73663"/>
</dbReference>
<dbReference type="RefSeq" id="NP_110193.1">
    <property type="nucleotide sequence ID" value="NC_000912.1"/>
</dbReference>
<dbReference type="RefSeq" id="WP_010874861.1">
    <property type="nucleotide sequence ID" value="NZ_OU342337.1"/>
</dbReference>
<dbReference type="SMR" id="P75281"/>
<dbReference type="IntAct" id="P75281">
    <property type="interactions" value="1"/>
</dbReference>
<dbReference type="STRING" id="272634.MPN_505"/>
<dbReference type="EnsemblBacteria" id="AAB95985">
    <property type="protein sequence ID" value="AAB95985"/>
    <property type="gene ID" value="MPN_505"/>
</dbReference>
<dbReference type="KEGG" id="mpn:MPN_505"/>
<dbReference type="PATRIC" id="fig|272634.6.peg.553"/>
<dbReference type="HOGENOM" id="CLU_1198717_0_0_14"/>
<dbReference type="BioCyc" id="MPNE272634:G1GJ3-827-MONOMER"/>
<dbReference type="Proteomes" id="UP000000808">
    <property type="component" value="Chromosome"/>
</dbReference>
<dbReference type="InterPro" id="IPR001595">
    <property type="entry name" value="Lipoprotein_3"/>
</dbReference>
<dbReference type="Pfam" id="PF00938">
    <property type="entry name" value="Lipoprotein_3"/>
    <property type="match status" value="1"/>
</dbReference>
<accession>P75281</accession>